<proteinExistence type="inferred from homology"/>
<dbReference type="EMBL" id="CM000364">
    <property type="protein sequence ID" value="EDX12160.1"/>
    <property type="molecule type" value="Genomic_DNA"/>
</dbReference>
<dbReference type="RefSeq" id="XP_002102657.1">
    <property type="nucleotide sequence ID" value="XM_002102621.2"/>
</dbReference>
<dbReference type="STRING" id="7240.B4R1Q1"/>
<dbReference type="EnsemblMetazoa" id="FBtr0219295">
    <property type="protein sequence ID" value="FBpp0217787"/>
    <property type="gene ID" value="FBgn0190886"/>
</dbReference>
<dbReference type="EnsemblMetazoa" id="XM_002102621.4">
    <property type="protein sequence ID" value="XP_002102657.2"/>
    <property type="gene ID" value="LOC6727268"/>
</dbReference>
<dbReference type="GeneID" id="6727268"/>
<dbReference type="KEGG" id="dsi:Dsimw501_GD19385"/>
<dbReference type="HOGENOM" id="CLU_1760725_0_0_1"/>
<dbReference type="OMA" id="GFWSCIS"/>
<dbReference type="OrthoDB" id="7843604at2759"/>
<dbReference type="PhylomeDB" id="B4R1Q1"/>
<dbReference type="Proteomes" id="UP000000304">
    <property type="component" value="Chromosome 3R"/>
</dbReference>
<dbReference type="GO" id="GO:0005615">
    <property type="term" value="C:extracellular space"/>
    <property type="evidence" value="ECO:0000250"/>
    <property type="project" value="UniProtKB"/>
</dbReference>
<dbReference type="GO" id="GO:0034605">
    <property type="term" value="P:cellular response to heat"/>
    <property type="evidence" value="ECO:0007669"/>
    <property type="project" value="EnsemblMetazoa"/>
</dbReference>
<dbReference type="GO" id="GO:0034599">
    <property type="term" value="P:cellular response to oxidative stress"/>
    <property type="evidence" value="ECO:0007669"/>
    <property type="project" value="EnsemblMetazoa"/>
</dbReference>
<dbReference type="GO" id="GO:0034644">
    <property type="term" value="P:cellular response to UV"/>
    <property type="evidence" value="ECO:0007669"/>
    <property type="project" value="EnsemblMetazoa"/>
</dbReference>
<dbReference type="GO" id="GO:0045087">
    <property type="term" value="P:innate immune response"/>
    <property type="evidence" value="ECO:0007669"/>
    <property type="project" value="UniProtKB-KW"/>
</dbReference>
<dbReference type="GO" id="GO:0009617">
    <property type="term" value="P:response to bacterium"/>
    <property type="evidence" value="ECO:0007669"/>
    <property type="project" value="EnsemblMetazoa"/>
</dbReference>
<dbReference type="GO" id="GO:0009408">
    <property type="term" value="P:response to heat"/>
    <property type="evidence" value="ECO:0000250"/>
    <property type="project" value="UniProtKB"/>
</dbReference>
<dbReference type="GO" id="GO:0006979">
    <property type="term" value="P:response to oxidative stress"/>
    <property type="evidence" value="ECO:0000250"/>
    <property type="project" value="UniProtKB"/>
</dbReference>
<dbReference type="GO" id="GO:0009411">
    <property type="term" value="P:response to UV"/>
    <property type="evidence" value="ECO:0000250"/>
    <property type="project" value="UniProtKB"/>
</dbReference>
<dbReference type="InterPro" id="IPR010825">
    <property type="entry name" value="Turandot"/>
</dbReference>
<dbReference type="Pfam" id="PF07240">
    <property type="entry name" value="Turandot"/>
    <property type="match status" value="1"/>
</dbReference>
<sequence length="148" mass="16341">MYFAIRLSFVLAVLFCLTGNGSARMLDADRNRLQQLQIRSQQSADANTQVDIAYEVIGIYDKYKGQGGSNVLREAQLNSQVNDFKRKTMVIDGVPAQGGVWGILGAIKKAADAVPDNVKKDAENLVKSSTKVLVRGIYDYLMGKMKQH</sequence>
<feature type="signal peptide" evidence="2">
    <location>
        <begin position="1"/>
        <end position="23"/>
    </location>
</feature>
<feature type="chain" id="PRO_0000355010" description="Protein Turandot Z">
    <location>
        <begin position="24"/>
        <end position="148"/>
    </location>
</feature>
<accession>B4R1Q1</accession>
<organism>
    <name type="scientific">Drosophila simulans</name>
    <name type="common">Fruit fly</name>
    <dbReference type="NCBI Taxonomy" id="7240"/>
    <lineage>
        <taxon>Eukaryota</taxon>
        <taxon>Metazoa</taxon>
        <taxon>Ecdysozoa</taxon>
        <taxon>Arthropoda</taxon>
        <taxon>Hexapoda</taxon>
        <taxon>Insecta</taxon>
        <taxon>Pterygota</taxon>
        <taxon>Neoptera</taxon>
        <taxon>Endopterygota</taxon>
        <taxon>Diptera</taxon>
        <taxon>Brachycera</taxon>
        <taxon>Muscomorpha</taxon>
        <taxon>Ephydroidea</taxon>
        <taxon>Drosophilidae</taxon>
        <taxon>Drosophila</taxon>
        <taxon>Sophophora</taxon>
    </lineage>
</organism>
<keyword id="KW-0391">Immunity</keyword>
<keyword id="KW-0399">Innate immunity</keyword>
<keyword id="KW-1185">Reference proteome</keyword>
<keyword id="KW-0964">Secreted</keyword>
<keyword id="KW-0732">Signal</keyword>
<gene>
    <name evidence="3" type="primary">TotZ</name>
    <name type="ORF">GD19385</name>
</gene>
<protein>
    <recommendedName>
        <fullName>Protein Turandot Z</fullName>
    </recommendedName>
</protein>
<reference evidence="3" key="1">
    <citation type="journal article" date="2007" name="Nature">
        <title>Evolution of genes and genomes on the Drosophila phylogeny.</title>
        <authorList>
            <consortium name="Drosophila 12 genomes consortium"/>
        </authorList>
    </citation>
    <scope>NUCLEOTIDE SEQUENCE [LARGE SCALE GENOMIC DNA]</scope>
</reference>
<name>TOTZ_DROSI</name>
<evidence type="ECO:0000250" key="1">
    <source>
        <dbReference type="UniProtKB" id="Q8IN41"/>
    </source>
</evidence>
<evidence type="ECO:0000255" key="2"/>
<evidence type="ECO:0000312" key="3">
    <source>
        <dbReference type="EMBL" id="EDX12160.1"/>
    </source>
</evidence>
<comment type="function">
    <text evidence="1">A humoral factor that may play a role in stress tolerance.</text>
</comment>
<comment type="subcellular location">
    <subcellularLocation>
        <location evidence="1">Secreted</location>
    </subcellularLocation>
</comment>
<comment type="similarity">
    <text evidence="2">Belongs to the Turandot family.</text>
</comment>